<organism>
    <name type="scientific">Skeletonema costatum</name>
    <name type="common">Marine centric diatom</name>
    <name type="synonym">Melosira costata</name>
    <dbReference type="NCBI Taxonomy" id="2843"/>
    <lineage>
        <taxon>Eukaryota</taxon>
        <taxon>Sar</taxon>
        <taxon>Stramenopiles</taxon>
        <taxon>Ochrophyta</taxon>
        <taxon>Bacillariophyta</taxon>
        <taxon>Coscinodiscophyceae</taxon>
        <taxon>Thalassiosirophycidae</taxon>
        <taxon>Thalassiosirales</taxon>
        <taxon>Skeletonemataceae</taxon>
        <taxon>Skeletonema</taxon>
    </lineage>
</organism>
<accession>O96813</accession>
<keyword id="KW-0150">Chloroplast</keyword>
<keyword id="KW-0472">Membrane</keyword>
<keyword id="KW-0602">Photosynthesis</keyword>
<keyword id="KW-0603">Photosystem I</keyword>
<keyword id="KW-0934">Plastid</keyword>
<keyword id="KW-0793">Thylakoid</keyword>
<keyword id="KW-0812">Transmembrane</keyword>
<keyword id="KW-1133">Transmembrane helix</keyword>
<protein>
    <recommendedName>
        <fullName>Photosystem I reaction center subunit VIII</fullName>
        <shortName>PSI-I</shortName>
    </recommendedName>
</protein>
<gene>
    <name type="primary">psaI</name>
</gene>
<dbReference type="EMBL" id="AJ132266">
    <property type="protein sequence ID" value="CAA10634.1"/>
    <property type="molecule type" value="Genomic_DNA"/>
</dbReference>
<dbReference type="SMR" id="O96813"/>
<dbReference type="GO" id="GO:0009535">
    <property type="term" value="C:chloroplast thylakoid membrane"/>
    <property type="evidence" value="ECO:0007669"/>
    <property type="project" value="UniProtKB-SubCell"/>
</dbReference>
<dbReference type="GO" id="GO:0009522">
    <property type="term" value="C:photosystem I"/>
    <property type="evidence" value="ECO:0007669"/>
    <property type="project" value="UniProtKB-KW"/>
</dbReference>
<dbReference type="GO" id="GO:0015979">
    <property type="term" value="P:photosynthesis"/>
    <property type="evidence" value="ECO:0007669"/>
    <property type="project" value="UniProtKB-UniRule"/>
</dbReference>
<dbReference type="HAMAP" id="MF_00431">
    <property type="entry name" value="PSI_PsaI"/>
    <property type="match status" value="1"/>
</dbReference>
<dbReference type="InterPro" id="IPR001302">
    <property type="entry name" value="PSI_PsaI"/>
</dbReference>
<dbReference type="InterPro" id="IPR036357">
    <property type="entry name" value="PSI_PsaI_sf"/>
</dbReference>
<dbReference type="NCBIfam" id="TIGR03052">
    <property type="entry name" value="PS_I_psaI"/>
    <property type="match status" value="1"/>
</dbReference>
<dbReference type="PANTHER" id="PTHR35775">
    <property type="match status" value="1"/>
</dbReference>
<dbReference type="PANTHER" id="PTHR35775:SF2">
    <property type="entry name" value="PHOTOSYSTEM I REACTION CENTER SUBUNIT VIII"/>
    <property type="match status" value="1"/>
</dbReference>
<dbReference type="Pfam" id="PF00796">
    <property type="entry name" value="PSI_8"/>
    <property type="match status" value="1"/>
</dbReference>
<dbReference type="SUPFAM" id="SSF81540">
    <property type="entry name" value="Subunit VIII of photosystem I reaction centre, PsaI"/>
    <property type="match status" value="1"/>
</dbReference>
<evidence type="ECO:0000250" key="1"/>
<evidence type="ECO:0000255" key="2"/>
<evidence type="ECO:0000305" key="3"/>
<sequence length="36" mass="3919">MAAAFLPSILVPLVGLIFPAFSMALFFLYSQKDDIA</sequence>
<geneLocation type="chloroplast"/>
<name>PSAI_SKECO</name>
<reference key="1">
    <citation type="submission" date="1999-01" db="EMBL/GenBank/DDBJ databases">
        <title>Plastid DNA sequences of Skeletonema costatum NIES 323.</title>
        <authorList>
            <person name="Tada N."/>
            <person name="Otsuka S."/>
            <person name="Oyaizu H."/>
            <person name="Matsumoto S."/>
        </authorList>
    </citation>
    <scope>NUCLEOTIDE SEQUENCE [GENOMIC DNA]</scope>
    <source>
        <strain>NIES-323 / Sk-85w</strain>
    </source>
</reference>
<comment type="function">
    <text evidence="1">May help in the organization of the PsaL subunit.</text>
</comment>
<comment type="subcellular location">
    <subcellularLocation>
        <location evidence="1">Plastid</location>
        <location evidence="1">Chloroplast thylakoid membrane</location>
        <topology evidence="1">Single-pass membrane protein</topology>
    </subcellularLocation>
</comment>
<comment type="similarity">
    <text evidence="3">Belongs to the PsaI family.</text>
</comment>
<proteinExistence type="inferred from homology"/>
<feature type="chain" id="PRO_0000194676" description="Photosystem I reaction center subunit VIII">
    <location>
        <begin position="1"/>
        <end position="36"/>
    </location>
</feature>
<feature type="transmembrane region" description="Helical" evidence="2">
    <location>
        <begin position="10"/>
        <end position="30"/>
    </location>
</feature>